<evidence type="ECO:0000305" key="1"/>
<reference key="1">
    <citation type="journal article" date="1995" name="Science">
        <title>The minimal gene complement of Mycoplasma genitalium.</title>
        <authorList>
            <person name="Fraser C.M."/>
            <person name="Gocayne J.D."/>
            <person name="White O."/>
            <person name="Adams M.D."/>
            <person name="Clayton R.A."/>
            <person name="Fleischmann R.D."/>
            <person name="Bult C.J."/>
            <person name="Kerlavage A.R."/>
            <person name="Sutton G.G."/>
            <person name="Kelley J.M."/>
            <person name="Fritchman J.L."/>
            <person name="Weidman J.F."/>
            <person name="Small K.V."/>
            <person name="Sandusky M."/>
            <person name="Fuhrmann J.L."/>
            <person name="Nguyen D.T."/>
            <person name="Utterback T.R."/>
            <person name="Saudek D.M."/>
            <person name="Phillips C.A."/>
            <person name="Merrick J.M."/>
            <person name="Tomb J.-F."/>
            <person name="Dougherty B.A."/>
            <person name="Bott K.F."/>
            <person name="Hu P.-C."/>
            <person name="Lucier T.S."/>
            <person name="Peterson S.N."/>
            <person name="Smith H.O."/>
            <person name="Hutchison C.A. III"/>
            <person name="Venter J.C."/>
        </authorList>
    </citation>
    <scope>NUCLEOTIDE SEQUENCE [LARGE SCALE GENOMIC DNA]</scope>
    <source>
        <strain>ATCC 33530 / DSM 19775 / NCTC 10195 / G37</strain>
    </source>
</reference>
<accession>P47706</accession>
<gene>
    <name type="ordered locus">MG470</name>
</gene>
<name>PARA_MYCGE</name>
<organism>
    <name type="scientific">Mycoplasma genitalium (strain ATCC 33530 / DSM 19775 / NCTC 10195 / G37)</name>
    <name type="common">Mycoplasmoides genitalium</name>
    <dbReference type="NCBI Taxonomy" id="243273"/>
    <lineage>
        <taxon>Bacteria</taxon>
        <taxon>Bacillati</taxon>
        <taxon>Mycoplasmatota</taxon>
        <taxon>Mycoplasmoidales</taxon>
        <taxon>Mycoplasmoidaceae</taxon>
        <taxon>Mycoplasmoides</taxon>
    </lineage>
</organism>
<sequence>MIISFVNNKGGVLKTTMATNVAGSLVKLCPERRKVILDLDGQGNVSASFGQNPERLNNTLIDILLKVPKFSGSNNFIEIDDCLLSVYEGLDILPCNFELNFADIDISRKKYKASDIAEIVKQLAKRYEFVLLDTPPNMATLVSTAMSLSDVIVIPFEPDQYSMLGLMRIVETIDTFKEKNTNLKTILVPTKVNVRTRLHNEVIDLAKTKAKKNNVAFSKNFVSLTSKSSAAVGYEKLPISLVSSPSKKYLNEYLEITKEILNLANYNVH</sequence>
<comment type="similarity">
    <text evidence="1">Belongs to the ParA family.</text>
</comment>
<feature type="chain" id="PRO_0000201986" description="ParA family protein MG470">
    <location>
        <begin position="1"/>
        <end position="269"/>
    </location>
</feature>
<dbReference type="EMBL" id="L43967">
    <property type="protein sequence ID" value="AAC72491.1"/>
    <property type="molecule type" value="Genomic_DNA"/>
</dbReference>
<dbReference type="PIR" id="I64251">
    <property type="entry name" value="I64251"/>
</dbReference>
<dbReference type="RefSeq" id="WP_009885563.1">
    <property type="nucleotide sequence ID" value="NC_000908.2"/>
</dbReference>
<dbReference type="SMR" id="P47706"/>
<dbReference type="FunCoup" id="P47706">
    <property type="interactions" value="88"/>
</dbReference>
<dbReference type="STRING" id="243273.MG_470"/>
<dbReference type="GeneID" id="88282653"/>
<dbReference type="KEGG" id="mge:MG_470"/>
<dbReference type="eggNOG" id="COG1192">
    <property type="taxonomic scope" value="Bacteria"/>
</dbReference>
<dbReference type="HOGENOM" id="CLU_037612_4_0_14"/>
<dbReference type="InParanoid" id="P47706"/>
<dbReference type="OrthoDB" id="9791162at2"/>
<dbReference type="BioCyc" id="MGEN243273:G1GJ2-566-MONOMER"/>
<dbReference type="Proteomes" id="UP000000807">
    <property type="component" value="Chromosome"/>
</dbReference>
<dbReference type="CDD" id="cd02042">
    <property type="entry name" value="ParAB_family"/>
    <property type="match status" value="1"/>
</dbReference>
<dbReference type="Gene3D" id="3.40.50.300">
    <property type="entry name" value="P-loop containing nucleotide triphosphate hydrolases"/>
    <property type="match status" value="1"/>
</dbReference>
<dbReference type="InterPro" id="IPR025669">
    <property type="entry name" value="AAA_dom"/>
</dbReference>
<dbReference type="InterPro" id="IPR050678">
    <property type="entry name" value="DNA_Partitioning_ATPase"/>
</dbReference>
<dbReference type="InterPro" id="IPR027417">
    <property type="entry name" value="P-loop_NTPase"/>
</dbReference>
<dbReference type="PANTHER" id="PTHR13696">
    <property type="entry name" value="P-LOOP CONTAINING NUCLEOSIDE TRIPHOSPHATE HYDROLASE"/>
    <property type="match status" value="1"/>
</dbReference>
<dbReference type="PANTHER" id="PTHR13696:SF52">
    <property type="entry name" value="PARA FAMILY PROTEIN CT_582"/>
    <property type="match status" value="1"/>
</dbReference>
<dbReference type="Pfam" id="PF13614">
    <property type="entry name" value="AAA_31"/>
    <property type="match status" value="1"/>
</dbReference>
<dbReference type="SUPFAM" id="SSF52540">
    <property type="entry name" value="P-loop containing nucleoside triphosphate hydrolases"/>
    <property type="match status" value="1"/>
</dbReference>
<keyword id="KW-1185">Reference proteome</keyword>
<protein>
    <recommendedName>
        <fullName>ParA family protein MG470</fullName>
    </recommendedName>
</protein>
<proteinExistence type="inferred from homology"/>